<organism>
    <name type="scientific">Neisseria meningitidis serogroup B (strain ATCC BAA-335 / MC58)</name>
    <dbReference type="NCBI Taxonomy" id="122586"/>
    <lineage>
        <taxon>Bacteria</taxon>
        <taxon>Pseudomonadati</taxon>
        <taxon>Pseudomonadota</taxon>
        <taxon>Betaproteobacteria</taxon>
        <taxon>Neisseriales</taxon>
        <taxon>Neisseriaceae</taxon>
        <taxon>Neisseria</taxon>
    </lineage>
</organism>
<keyword id="KW-0963">Cytoplasm</keyword>
<keyword id="KW-0378">Hydrolase</keyword>
<keyword id="KW-0479">Metal-binding</keyword>
<keyword id="KW-0547">Nucleotide-binding</keyword>
<keyword id="KW-1185">Reference proteome</keyword>
<accession>Q9JYP8</accession>
<reference key="1">
    <citation type="journal article" date="2000" name="Science">
        <title>Complete genome sequence of Neisseria meningitidis serogroup B strain MC58.</title>
        <authorList>
            <person name="Tettelin H."/>
            <person name="Saunders N.J."/>
            <person name="Heidelberg J.F."/>
            <person name="Jeffries A.C."/>
            <person name="Nelson K.E."/>
            <person name="Eisen J.A."/>
            <person name="Ketchum K.A."/>
            <person name="Hood D.W."/>
            <person name="Peden J.F."/>
            <person name="Dodson R.J."/>
            <person name="Nelson W.C."/>
            <person name="Gwinn M.L."/>
            <person name="DeBoy R.T."/>
            <person name="Peterson J.D."/>
            <person name="Hickey E.K."/>
            <person name="Haft D.H."/>
            <person name="Salzberg S.L."/>
            <person name="White O."/>
            <person name="Fleischmann R.D."/>
            <person name="Dougherty B.A."/>
            <person name="Mason T.M."/>
            <person name="Ciecko A."/>
            <person name="Parksey D.S."/>
            <person name="Blair E."/>
            <person name="Cittone H."/>
            <person name="Clark E.B."/>
            <person name="Cotton M.D."/>
            <person name="Utterback T.R."/>
            <person name="Khouri H.M."/>
            <person name="Qin H."/>
            <person name="Vamathevan J.J."/>
            <person name="Gill J."/>
            <person name="Scarlato V."/>
            <person name="Masignani V."/>
            <person name="Pizza M."/>
            <person name="Grandi G."/>
            <person name="Sun L."/>
            <person name="Smith H.O."/>
            <person name="Fraser C.M."/>
            <person name="Moxon E.R."/>
            <person name="Rappuoli R."/>
            <person name="Venter J.C."/>
        </authorList>
    </citation>
    <scope>NUCLEOTIDE SEQUENCE [LARGE SCALE GENOMIC DNA]</scope>
    <source>
        <strain>ATCC BAA-335 / MC58</strain>
    </source>
</reference>
<sequence length="248" mass="27034">MNVLISNDDGYLSEGIAVLARVTAEFANVRVVAPERDRSGVSNSLTLERPLQLKQAQNGFYYVNGTPTDCIHIGQSVFSDFQADFVFSGINRGANMGDDTLYSGTVAAATEAYLMGIPAVAFSLNDASGRYWATAEQALWTLLAHFFKNPPQSPILWNINIPAVAPEDVRGIKIARLGRRHHGQNVIPARNPRGEQIYWIGPVGEVSDREEGTDFGECGAGFITVTPLQIDLTAYPDMAETAAFWHAD</sequence>
<gene>
    <name evidence="1" type="primary">surE</name>
    <name type="ordered locus">NMB1484</name>
</gene>
<evidence type="ECO:0000255" key="1">
    <source>
        <dbReference type="HAMAP-Rule" id="MF_00060"/>
    </source>
</evidence>
<dbReference type="EC" id="3.1.3.5" evidence="1"/>
<dbReference type="EMBL" id="AE002098">
    <property type="protein sequence ID" value="AAF41840.1"/>
    <property type="molecule type" value="Genomic_DNA"/>
</dbReference>
<dbReference type="PIR" id="B81077">
    <property type="entry name" value="B81077"/>
</dbReference>
<dbReference type="RefSeq" id="NP_274492.1">
    <property type="nucleotide sequence ID" value="NC_003112.2"/>
</dbReference>
<dbReference type="RefSeq" id="WP_002225086.1">
    <property type="nucleotide sequence ID" value="NC_003112.2"/>
</dbReference>
<dbReference type="SMR" id="Q9JYP8"/>
<dbReference type="FunCoup" id="Q9JYP8">
    <property type="interactions" value="193"/>
</dbReference>
<dbReference type="STRING" id="122586.NMB1484"/>
<dbReference type="PaxDb" id="122586-NMB1484"/>
<dbReference type="KEGG" id="nme:NMB1484"/>
<dbReference type="PATRIC" id="fig|122586.8.peg.1876"/>
<dbReference type="HOGENOM" id="CLU_045192_1_2_4"/>
<dbReference type="InParanoid" id="Q9JYP8"/>
<dbReference type="OrthoDB" id="9780815at2"/>
<dbReference type="Proteomes" id="UP000000425">
    <property type="component" value="Chromosome"/>
</dbReference>
<dbReference type="GO" id="GO:0005737">
    <property type="term" value="C:cytoplasm"/>
    <property type="evidence" value="ECO:0007669"/>
    <property type="project" value="UniProtKB-SubCell"/>
</dbReference>
<dbReference type="GO" id="GO:0008254">
    <property type="term" value="F:3'-nucleotidase activity"/>
    <property type="evidence" value="ECO:0000318"/>
    <property type="project" value="GO_Central"/>
</dbReference>
<dbReference type="GO" id="GO:0008253">
    <property type="term" value="F:5'-nucleotidase activity"/>
    <property type="evidence" value="ECO:0000318"/>
    <property type="project" value="GO_Central"/>
</dbReference>
<dbReference type="GO" id="GO:0004309">
    <property type="term" value="F:exopolyphosphatase activity"/>
    <property type="evidence" value="ECO:0000318"/>
    <property type="project" value="GO_Central"/>
</dbReference>
<dbReference type="GO" id="GO:0046872">
    <property type="term" value="F:metal ion binding"/>
    <property type="evidence" value="ECO:0007669"/>
    <property type="project" value="UniProtKB-UniRule"/>
</dbReference>
<dbReference type="GO" id="GO:0000166">
    <property type="term" value="F:nucleotide binding"/>
    <property type="evidence" value="ECO:0007669"/>
    <property type="project" value="UniProtKB-KW"/>
</dbReference>
<dbReference type="FunFam" id="3.40.1210.10:FF:000001">
    <property type="entry name" value="5'/3'-nucleotidase SurE"/>
    <property type="match status" value="1"/>
</dbReference>
<dbReference type="Gene3D" id="3.40.1210.10">
    <property type="entry name" value="Survival protein SurE-like phosphatase/nucleotidase"/>
    <property type="match status" value="1"/>
</dbReference>
<dbReference type="HAMAP" id="MF_00060">
    <property type="entry name" value="SurE"/>
    <property type="match status" value="1"/>
</dbReference>
<dbReference type="InterPro" id="IPR030048">
    <property type="entry name" value="SurE"/>
</dbReference>
<dbReference type="InterPro" id="IPR002828">
    <property type="entry name" value="SurE-like_Pase/nucleotidase"/>
</dbReference>
<dbReference type="InterPro" id="IPR036523">
    <property type="entry name" value="SurE-like_sf"/>
</dbReference>
<dbReference type="NCBIfam" id="NF001489">
    <property type="entry name" value="PRK00346.1-3"/>
    <property type="match status" value="1"/>
</dbReference>
<dbReference type="NCBIfam" id="NF001490">
    <property type="entry name" value="PRK00346.1-4"/>
    <property type="match status" value="1"/>
</dbReference>
<dbReference type="NCBIfam" id="TIGR00087">
    <property type="entry name" value="surE"/>
    <property type="match status" value="1"/>
</dbReference>
<dbReference type="PANTHER" id="PTHR30457">
    <property type="entry name" value="5'-NUCLEOTIDASE SURE"/>
    <property type="match status" value="1"/>
</dbReference>
<dbReference type="PANTHER" id="PTHR30457:SF12">
    <property type="entry name" value="5'_3'-NUCLEOTIDASE SURE"/>
    <property type="match status" value="1"/>
</dbReference>
<dbReference type="Pfam" id="PF01975">
    <property type="entry name" value="SurE"/>
    <property type="match status" value="1"/>
</dbReference>
<dbReference type="SUPFAM" id="SSF64167">
    <property type="entry name" value="SurE-like"/>
    <property type="match status" value="1"/>
</dbReference>
<comment type="function">
    <text evidence="1">Nucleotidase that shows phosphatase activity on nucleoside 5'-monophosphates.</text>
</comment>
<comment type="catalytic activity">
    <reaction evidence="1">
        <text>a ribonucleoside 5'-phosphate + H2O = a ribonucleoside + phosphate</text>
        <dbReference type="Rhea" id="RHEA:12484"/>
        <dbReference type="ChEBI" id="CHEBI:15377"/>
        <dbReference type="ChEBI" id="CHEBI:18254"/>
        <dbReference type="ChEBI" id="CHEBI:43474"/>
        <dbReference type="ChEBI" id="CHEBI:58043"/>
        <dbReference type="EC" id="3.1.3.5"/>
    </reaction>
</comment>
<comment type="cofactor">
    <cofactor evidence="1">
        <name>a divalent metal cation</name>
        <dbReference type="ChEBI" id="CHEBI:60240"/>
    </cofactor>
    <text evidence="1">Binds 1 divalent metal cation per subunit.</text>
</comment>
<comment type="subcellular location">
    <subcellularLocation>
        <location evidence="1">Cytoplasm</location>
    </subcellularLocation>
</comment>
<comment type="similarity">
    <text evidence="1">Belongs to the SurE nucleotidase family.</text>
</comment>
<name>SURE_NEIMB</name>
<protein>
    <recommendedName>
        <fullName evidence="1">5'-nucleotidase SurE</fullName>
        <ecNumber evidence="1">3.1.3.5</ecNumber>
    </recommendedName>
    <alternativeName>
        <fullName evidence="1">Nucleoside 5'-monophosphate phosphohydrolase</fullName>
    </alternativeName>
</protein>
<proteinExistence type="inferred from homology"/>
<feature type="chain" id="PRO_0000111823" description="5'-nucleotidase SurE">
    <location>
        <begin position="1"/>
        <end position="248"/>
    </location>
</feature>
<feature type="binding site" evidence="1">
    <location>
        <position position="8"/>
    </location>
    <ligand>
        <name>a divalent metal cation</name>
        <dbReference type="ChEBI" id="CHEBI:60240"/>
    </ligand>
</feature>
<feature type="binding site" evidence="1">
    <location>
        <position position="9"/>
    </location>
    <ligand>
        <name>a divalent metal cation</name>
        <dbReference type="ChEBI" id="CHEBI:60240"/>
    </ligand>
</feature>
<feature type="binding site" evidence="1">
    <location>
        <position position="39"/>
    </location>
    <ligand>
        <name>a divalent metal cation</name>
        <dbReference type="ChEBI" id="CHEBI:60240"/>
    </ligand>
</feature>
<feature type="binding site" evidence="1">
    <location>
        <position position="91"/>
    </location>
    <ligand>
        <name>a divalent metal cation</name>
        <dbReference type="ChEBI" id="CHEBI:60240"/>
    </ligand>
</feature>